<sequence>MARRALKLASLAAAASGIYLYGNKFMDPNDFGVVRVGRAIATTAVITYDYLTSLRNVPYGSEEYDFLKSQVHLRSAERLRELCCANRGTFIKVGQHLGALDYLLPEEYTRTLKVLHSQAPQSTRQEIEQVIREDLGKEIKELFVSFEDTPLGAASLAQVHKAVLQDGRTVAVKIQHPKVQAQSSKDIFLMEVLLLVVKQIFPDFEFMWLVEEAKKNLPLELDFLNEGRNAEKVAQMLKNFEFLKVPRIYWELSTRRVLLMEFMEGGQVNDKAYMEKNGIDVNEISRNLGKLYSEMIFVNGFVHCDPHPGNVLVKKCPDSGKAYIILLDHGLYQVLSESFRMDYCRLWLALIKADMKRVQKYSRRLGAGDLYPLFACMLTARSWESVNRGIDQSPVSASEDVEIRSNAAAYLPQITQLLNNVPRQMLLLLKTNDLLRGIESALHTRASASSFLNMSRCCIRAVSTYQRSKSHSLYRRVHISLTEALSLWQINLYELFLWLKGSRLGSWVIAFLSRMHHST</sequence>
<dbReference type="EC" id="2.7.-.-" evidence="2"/>
<dbReference type="EMBL" id="AJ719297">
    <property type="protein sequence ID" value="CAG30956.1"/>
    <property type="molecule type" value="mRNA"/>
</dbReference>
<dbReference type="RefSeq" id="NP_001073199.1">
    <property type="nucleotide sequence ID" value="NM_001079731.1"/>
</dbReference>
<dbReference type="SMR" id="Q5ZMT7"/>
<dbReference type="FunCoup" id="Q5ZMT7">
    <property type="interactions" value="990"/>
</dbReference>
<dbReference type="STRING" id="9031.ENSGALP00000051871"/>
<dbReference type="PaxDb" id="9031-ENSGALP00000017088"/>
<dbReference type="GeneID" id="423382"/>
<dbReference type="KEGG" id="gga:423382"/>
<dbReference type="CTD" id="57143"/>
<dbReference type="VEuPathDB" id="HostDB:geneid_423382"/>
<dbReference type="eggNOG" id="KOG1235">
    <property type="taxonomic scope" value="Eukaryota"/>
</dbReference>
<dbReference type="InParanoid" id="Q5ZMT7"/>
<dbReference type="OrthoDB" id="427480at2759"/>
<dbReference type="PhylomeDB" id="Q5ZMT7"/>
<dbReference type="PRO" id="PR:Q5ZMT7"/>
<dbReference type="Proteomes" id="UP000000539">
    <property type="component" value="Unassembled WGS sequence"/>
</dbReference>
<dbReference type="GO" id="GO:0005743">
    <property type="term" value="C:mitochondrial inner membrane"/>
    <property type="evidence" value="ECO:0000318"/>
    <property type="project" value="GO_Central"/>
</dbReference>
<dbReference type="GO" id="GO:0005524">
    <property type="term" value="F:ATP binding"/>
    <property type="evidence" value="ECO:0007669"/>
    <property type="project" value="UniProtKB-KW"/>
</dbReference>
<dbReference type="GO" id="GO:0004674">
    <property type="term" value="F:protein serine/threonine kinase activity"/>
    <property type="evidence" value="ECO:0007669"/>
    <property type="project" value="UniProtKB-KW"/>
</dbReference>
<dbReference type="GO" id="GO:0055088">
    <property type="term" value="P:lipid homeostasis"/>
    <property type="evidence" value="ECO:0000318"/>
    <property type="project" value="GO_Central"/>
</dbReference>
<dbReference type="GO" id="GO:0007005">
    <property type="term" value="P:mitochondrion organization"/>
    <property type="evidence" value="ECO:0000318"/>
    <property type="project" value="GO_Central"/>
</dbReference>
<dbReference type="CDD" id="cd13969">
    <property type="entry name" value="ADCK1-like"/>
    <property type="match status" value="1"/>
</dbReference>
<dbReference type="Gene3D" id="1.10.510.10">
    <property type="entry name" value="Transferase(Phosphotransferase) domain 1"/>
    <property type="match status" value="1"/>
</dbReference>
<dbReference type="InterPro" id="IPR004147">
    <property type="entry name" value="ABC1_dom"/>
</dbReference>
<dbReference type="InterPro" id="IPR045307">
    <property type="entry name" value="ADCK1_dom"/>
</dbReference>
<dbReference type="InterPro" id="IPR011009">
    <property type="entry name" value="Kinase-like_dom_sf"/>
</dbReference>
<dbReference type="InterPro" id="IPR051130">
    <property type="entry name" value="Mito_struct-func_regulator"/>
</dbReference>
<dbReference type="InterPro" id="IPR000719">
    <property type="entry name" value="Prot_kinase_dom"/>
</dbReference>
<dbReference type="PANTHER" id="PTHR43173:SF19">
    <property type="entry name" value="AARF DOMAIN-CONTAINING PROTEIN KINASE 1"/>
    <property type="match status" value="1"/>
</dbReference>
<dbReference type="PANTHER" id="PTHR43173">
    <property type="entry name" value="ABC1 FAMILY PROTEIN"/>
    <property type="match status" value="1"/>
</dbReference>
<dbReference type="Pfam" id="PF03109">
    <property type="entry name" value="ABC1"/>
    <property type="match status" value="1"/>
</dbReference>
<dbReference type="SUPFAM" id="SSF56112">
    <property type="entry name" value="Protein kinase-like (PK-like)"/>
    <property type="match status" value="1"/>
</dbReference>
<dbReference type="PROSITE" id="PS50011">
    <property type="entry name" value="PROTEIN_KINASE_DOM"/>
    <property type="match status" value="1"/>
</dbReference>
<keyword id="KW-0067">ATP-binding</keyword>
<keyword id="KW-0418">Kinase</keyword>
<keyword id="KW-0496">Mitochondrion</keyword>
<keyword id="KW-0547">Nucleotide-binding</keyword>
<keyword id="KW-1185">Reference proteome</keyword>
<keyword id="KW-0723">Serine/threonine-protein kinase</keyword>
<keyword id="KW-0808">Transferase</keyword>
<keyword id="KW-0809">Transit peptide</keyword>
<gene>
    <name type="primary">ADCK1</name>
    <name type="ORF">RCJMB04_1d9</name>
</gene>
<organism>
    <name type="scientific">Gallus gallus</name>
    <name type="common">Chicken</name>
    <dbReference type="NCBI Taxonomy" id="9031"/>
    <lineage>
        <taxon>Eukaryota</taxon>
        <taxon>Metazoa</taxon>
        <taxon>Chordata</taxon>
        <taxon>Craniata</taxon>
        <taxon>Vertebrata</taxon>
        <taxon>Euteleostomi</taxon>
        <taxon>Archelosauria</taxon>
        <taxon>Archosauria</taxon>
        <taxon>Dinosauria</taxon>
        <taxon>Saurischia</taxon>
        <taxon>Theropoda</taxon>
        <taxon>Coelurosauria</taxon>
        <taxon>Aves</taxon>
        <taxon>Neognathae</taxon>
        <taxon>Galloanserae</taxon>
        <taxon>Galliformes</taxon>
        <taxon>Phasianidae</taxon>
        <taxon>Phasianinae</taxon>
        <taxon>Gallus</taxon>
    </lineage>
</organism>
<evidence type="ECO:0000250" key="1">
    <source>
        <dbReference type="UniProtKB" id="Q86TW2"/>
    </source>
</evidence>
<evidence type="ECO:0000255" key="2">
    <source>
        <dbReference type="PROSITE-ProRule" id="PRU00159"/>
    </source>
</evidence>
<evidence type="ECO:0000305" key="3"/>
<accession>Q5ZMT7</accession>
<protein>
    <recommendedName>
        <fullName evidence="3">AarF domain-containing protein kinase 1</fullName>
        <ecNumber evidence="2">2.7.-.-</ecNumber>
    </recommendedName>
</protein>
<name>ADCK1_CHICK</name>
<proteinExistence type="evidence at transcript level"/>
<reference key="1">
    <citation type="journal article" date="2005" name="Genome Biol.">
        <title>Full-length cDNAs from chicken bursal lymphocytes to facilitate gene function analysis.</title>
        <authorList>
            <person name="Caldwell R.B."/>
            <person name="Kierzek A.M."/>
            <person name="Arakawa H."/>
            <person name="Bezzubov Y."/>
            <person name="Zaim J."/>
            <person name="Fiedler P."/>
            <person name="Kutter S."/>
            <person name="Blagodatski A."/>
            <person name="Kostovska D."/>
            <person name="Koter M."/>
            <person name="Plachy J."/>
            <person name="Carninci P."/>
            <person name="Hayashizaki Y."/>
            <person name="Buerstedde J.-M."/>
        </authorList>
    </citation>
    <scope>NUCLEOTIDE SEQUENCE [LARGE SCALE MRNA]</scope>
    <source>
        <strain>CB</strain>
        <tissue>Bursa of Fabricius</tissue>
    </source>
</reference>
<feature type="transit peptide" description="Mitochondrion" evidence="3">
    <location>
        <begin position="1"/>
        <end status="unknown"/>
    </location>
</feature>
<feature type="chain" id="PRO_0000252251" description="AarF domain-containing protein kinase 1">
    <location>
        <begin status="unknown"/>
        <end position="519"/>
    </location>
</feature>
<feature type="domain" description="Protein kinase" evidence="2">
    <location>
        <begin position="145"/>
        <end position="481"/>
    </location>
</feature>
<feature type="active site" description="Proton acceptor" evidence="2">
    <location>
        <position position="305"/>
    </location>
</feature>
<feature type="binding site" evidence="2">
    <location>
        <begin position="151"/>
        <end position="159"/>
    </location>
    <ligand>
        <name>ATP</name>
        <dbReference type="ChEBI" id="CHEBI:30616"/>
    </ligand>
</feature>
<feature type="binding site" evidence="2">
    <location>
        <position position="173"/>
    </location>
    <ligand>
        <name>ATP</name>
        <dbReference type="ChEBI" id="CHEBI:30616"/>
    </ligand>
</feature>
<comment type="function">
    <text evidence="1 3">Appears to be essential for maintaining mitochondrial cristae formation and mitochondrial function by acting via YME1L1 in a kinase-independent manner to regulate essential mitochondrial structural proteins OPA1 and IMMT (By similarity). The action of this enzyme is not yet clear. It is not known if it has protein kinase activity and what type of substrate it would phosphorylate (Ser, Thr or Tyr) (Probable).</text>
</comment>
<comment type="subcellular location">
    <subcellularLocation>
        <location evidence="1">Mitochondrion</location>
    </subcellularLocation>
</comment>
<comment type="similarity">
    <text evidence="3">Belongs to the protein kinase superfamily. ADCK protein kinase family.</text>
</comment>